<protein>
    <recommendedName>
        <fullName>Flagellar radial spoke protein 6</fullName>
    </recommendedName>
</protein>
<proteinExistence type="evidence at protein level"/>
<keyword id="KW-0002">3D-structure</keyword>
<keyword id="KW-0966">Cell projection</keyword>
<keyword id="KW-0969">Cilium</keyword>
<keyword id="KW-0963">Cytoplasm</keyword>
<keyword id="KW-0206">Cytoskeleton</keyword>
<keyword id="KW-0282">Flagellum</keyword>
<keyword id="KW-0488">Methylation</keyword>
<accession>Q01657</accession>
<gene>
    <name type="primary">RSP6</name>
</gene>
<dbReference type="EMBL" id="M87526">
    <property type="protein sequence ID" value="AAA33093.1"/>
    <property type="molecule type" value="Genomic_DNA"/>
</dbReference>
<dbReference type="PIR" id="B44498">
    <property type="entry name" value="B44498"/>
</dbReference>
<dbReference type="RefSeq" id="XP_001700729.1">
    <property type="nucleotide sequence ID" value="XM_001700677.1"/>
</dbReference>
<dbReference type="PDB" id="7JR9">
    <property type="method" value="EM"/>
    <property type="resolution" value="2.95 A"/>
    <property type="chains" value="D=1-459"/>
</dbReference>
<dbReference type="PDB" id="7JRJ">
    <property type="method" value="EM"/>
    <property type="resolution" value="3.03 A"/>
    <property type="chains" value="D=1-459"/>
</dbReference>
<dbReference type="PDB" id="7JTK">
    <property type="method" value="EM"/>
    <property type="resolution" value="3.20 A"/>
    <property type="chains" value="K/L=1-459"/>
</dbReference>
<dbReference type="PDB" id="8GLV">
    <property type="method" value="EM"/>
    <property type="resolution" value="3.10 A"/>
    <property type="chains" value="IA/IB/Ja/Jb=1-459"/>
</dbReference>
<dbReference type="PDBsum" id="7JR9"/>
<dbReference type="PDBsum" id="7JRJ"/>
<dbReference type="PDBsum" id="7JTK"/>
<dbReference type="PDBsum" id="8GLV"/>
<dbReference type="EMDB" id="EMD-22444"/>
<dbReference type="EMDB" id="EMD-22446"/>
<dbReference type="EMDB" id="EMD-22475"/>
<dbReference type="EMDB" id="EMD-40220"/>
<dbReference type="SMR" id="Q01657"/>
<dbReference type="iPTMnet" id="Q01657"/>
<dbReference type="PaxDb" id="3055-EDP06983"/>
<dbReference type="EnsemblPlants" id="PNW83461">
    <property type="protein sequence ID" value="PNW83461"/>
    <property type="gene ID" value="CHLRE_05g242550v5"/>
</dbReference>
<dbReference type="Gramene" id="PNW83461">
    <property type="protein sequence ID" value="PNW83461"/>
    <property type="gene ID" value="CHLRE_05g242550v5"/>
</dbReference>
<dbReference type="KEGG" id="cre:CHLRE_05g242550v5"/>
<dbReference type="eggNOG" id="ENOG502QSU4">
    <property type="taxonomic scope" value="Eukaryota"/>
</dbReference>
<dbReference type="HOGENOM" id="CLU_021526_0_0_1"/>
<dbReference type="OMA" id="TYFVCND"/>
<dbReference type="OrthoDB" id="272202at2759"/>
<dbReference type="GO" id="GO:0031514">
    <property type="term" value="C:motile cilium"/>
    <property type="evidence" value="ECO:0007669"/>
    <property type="project" value="UniProtKB-KW"/>
</dbReference>
<dbReference type="GO" id="GO:0001535">
    <property type="term" value="C:radial spoke head"/>
    <property type="evidence" value="ECO:0000304"/>
    <property type="project" value="MGI"/>
</dbReference>
<dbReference type="GO" id="GO:0060271">
    <property type="term" value="P:cilium assembly"/>
    <property type="evidence" value="ECO:0007669"/>
    <property type="project" value="InterPro"/>
</dbReference>
<dbReference type="GO" id="GO:0060294">
    <property type="term" value="P:cilium movement involved in cell motility"/>
    <property type="evidence" value="ECO:0007669"/>
    <property type="project" value="InterPro"/>
</dbReference>
<dbReference type="CDD" id="cd22963">
    <property type="entry name" value="DD_CrRSP4-like"/>
    <property type="match status" value="1"/>
</dbReference>
<dbReference type="InterPro" id="IPR006802">
    <property type="entry name" value="Radial_spoke"/>
</dbReference>
<dbReference type="PANTHER" id="PTHR13159:SF0">
    <property type="entry name" value="RADIAL SPOKE HEAD 6 HOMOLOG A"/>
    <property type="match status" value="1"/>
</dbReference>
<dbReference type="PANTHER" id="PTHR13159">
    <property type="entry name" value="RADIAL SPOKEHEAD-RELATED"/>
    <property type="match status" value="1"/>
</dbReference>
<dbReference type="Pfam" id="PF04712">
    <property type="entry name" value="Radial_spoke"/>
    <property type="match status" value="2"/>
</dbReference>
<name>RSP6_CHLRE</name>
<organism>
    <name type="scientific">Chlamydomonas reinhardtii</name>
    <name type="common">Chlamydomonas smithii</name>
    <dbReference type="NCBI Taxonomy" id="3055"/>
    <lineage>
        <taxon>Eukaryota</taxon>
        <taxon>Viridiplantae</taxon>
        <taxon>Chlorophyta</taxon>
        <taxon>core chlorophytes</taxon>
        <taxon>Chlorophyceae</taxon>
        <taxon>CS clade</taxon>
        <taxon>Chlamydomonadales</taxon>
        <taxon>Chlamydomonadaceae</taxon>
        <taxon>Chlamydomonas</taxon>
    </lineage>
</organism>
<reference key="1">
    <citation type="journal article" date="1992" name="Mol. Cell. Biol.">
        <title>Sequence analysis reveals homology between two proteins of the flagellar radial spoke.</title>
        <authorList>
            <person name="Curry A.M."/>
            <person name="Williams B.D."/>
            <person name="Rosenbaum J.L."/>
        </authorList>
    </citation>
    <scope>NUCLEOTIDE SEQUENCE [GENOMIC DNA]</scope>
    <scope>FUNCTION</scope>
    <scope>SUBCELLULAR LOCATION</scope>
    <scope>SUBUNIT</scope>
</reference>
<reference key="2">
    <citation type="journal article" date="2006" name="J. Cell Sci.">
        <title>Radial spoke proteins of Chlamydomonas flagella.</title>
        <authorList>
            <person name="Yang P."/>
            <person name="Diener D.R."/>
            <person name="Yang C."/>
            <person name="Kohno T."/>
            <person name="Pazour G.J."/>
            <person name="Dienes J.M."/>
            <person name="Agrin N.S."/>
            <person name="King S.M."/>
            <person name="Sale W.S."/>
            <person name="Kamiya R."/>
            <person name="Rosenbaum J.L."/>
            <person name="Witman G.B."/>
        </authorList>
    </citation>
    <scope>IDENTIFICATION BY MASS SPECTROMETRY</scope>
</reference>
<reference key="3">
    <citation type="journal article" date="2013" name="Biochemistry">
        <title>Methylation of structural components of the axoneme occurs during flagellar disassembly.</title>
        <authorList>
            <person name="Werner-Peterson R."/>
            <person name="Sloboda R.D."/>
        </authorList>
    </citation>
    <scope>METHYLATION AT ARG-267 AND ARG-398</scope>
</reference>
<feature type="chain" id="PRO_0000097495" description="Flagellar radial spoke protein 6">
    <location>
        <begin position="1"/>
        <end position="459"/>
    </location>
</feature>
<feature type="region of interest" description="Disordered" evidence="1">
    <location>
        <begin position="309"/>
        <end position="330"/>
    </location>
</feature>
<feature type="region of interest" description="Disordered" evidence="1">
    <location>
        <begin position="418"/>
        <end position="459"/>
    </location>
</feature>
<feature type="modified residue" description="Asymmetric dimethylarginine" evidence="3">
    <location>
        <position position="267"/>
    </location>
</feature>
<feature type="modified residue" description="Asymmetric dimethylarginine" evidence="3">
    <location>
        <position position="398"/>
    </location>
</feature>
<feature type="helix" evidence="6">
    <location>
        <begin position="4"/>
        <end position="14"/>
    </location>
</feature>
<feature type="strand" evidence="7">
    <location>
        <begin position="16"/>
        <end position="22"/>
    </location>
</feature>
<feature type="helix" evidence="6">
    <location>
        <begin position="23"/>
        <end position="36"/>
    </location>
</feature>
<feature type="helix" evidence="6">
    <location>
        <begin position="42"/>
        <end position="48"/>
    </location>
</feature>
<feature type="helix" evidence="5">
    <location>
        <begin position="73"/>
        <end position="80"/>
    </location>
</feature>
<feature type="turn" evidence="6">
    <location>
        <begin position="91"/>
        <end position="93"/>
    </location>
</feature>
<feature type="helix" evidence="5">
    <location>
        <begin position="110"/>
        <end position="120"/>
    </location>
</feature>
<feature type="helix" evidence="5">
    <location>
        <begin position="126"/>
        <end position="141"/>
    </location>
</feature>
<feature type="turn" evidence="5">
    <location>
        <begin position="143"/>
        <end position="146"/>
    </location>
</feature>
<feature type="strand" evidence="5">
    <location>
        <begin position="147"/>
        <end position="156"/>
    </location>
</feature>
<feature type="strand" evidence="5">
    <location>
        <begin position="158"/>
        <end position="161"/>
    </location>
</feature>
<feature type="strand" evidence="5">
    <location>
        <begin position="163"/>
        <end position="172"/>
    </location>
</feature>
<feature type="helix" evidence="5">
    <location>
        <begin position="192"/>
        <end position="194"/>
    </location>
</feature>
<feature type="strand" evidence="5">
    <location>
        <begin position="195"/>
        <end position="203"/>
    </location>
</feature>
<feature type="helix" evidence="5">
    <location>
        <begin position="216"/>
        <end position="223"/>
    </location>
</feature>
<feature type="strand" evidence="7">
    <location>
        <begin position="231"/>
        <end position="234"/>
    </location>
</feature>
<feature type="turn" evidence="5">
    <location>
        <begin position="239"/>
        <end position="242"/>
    </location>
</feature>
<feature type="strand" evidence="5">
    <location>
        <begin position="244"/>
        <end position="246"/>
    </location>
</feature>
<feature type="helix" evidence="5">
    <location>
        <begin position="247"/>
        <end position="262"/>
    </location>
</feature>
<feature type="strand" evidence="5">
    <location>
        <begin position="264"/>
        <end position="266"/>
    </location>
</feature>
<feature type="strand" evidence="5">
    <location>
        <begin position="269"/>
        <end position="272"/>
    </location>
</feature>
<feature type="strand" evidence="5">
    <location>
        <begin position="274"/>
        <end position="277"/>
    </location>
</feature>
<feature type="strand" evidence="5">
    <location>
        <begin position="279"/>
        <end position="281"/>
    </location>
</feature>
<feature type="helix" evidence="5">
    <location>
        <begin position="290"/>
        <end position="294"/>
    </location>
</feature>
<feature type="strand" evidence="5">
    <location>
        <begin position="298"/>
        <end position="301"/>
    </location>
</feature>
<feature type="strand" evidence="5">
    <location>
        <begin position="310"/>
        <end position="313"/>
    </location>
</feature>
<feature type="strand" evidence="6">
    <location>
        <begin position="329"/>
        <end position="331"/>
    </location>
</feature>
<feature type="turn" evidence="5">
    <location>
        <begin position="333"/>
        <end position="335"/>
    </location>
</feature>
<feature type="helix" evidence="5">
    <location>
        <begin position="346"/>
        <end position="348"/>
    </location>
</feature>
<feature type="strand" evidence="5">
    <location>
        <begin position="364"/>
        <end position="370"/>
    </location>
</feature>
<feature type="strand" evidence="7">
    <location>
        <begin position="372"/>
        <end position="374"/>
    </location>
</feature>
<feature type="strand" evidence="5">
    <location>
        <begin position="381"/>
        <end position="388"/>
    </location>
</feature>
<feature type="strand" evidence="5">
    <location>
        <begin position="391"/>
        <end position="398"/>
    </location>
</feature>
<feature type="strand" evidence="5">
    <location>
        <begin position="400"/>
        <end position="406"/>
    </location>
</feature>
<evidence type="ECO:0000256" key="1">
    <source>
        <dbReference type="SAM" id="MobiDB-lite"/>
    </source>
</evidence>
<evidence type="ECO:0000269" key="2">
    <source>
    </source>
</evidence>
<evidence type="ECO:0000269" key="3">
    <source>
    </source>
</evidence>
<evidence type="ECO:0000305" key="4"/>
<evidence type="ECO:0007829" key="5">
    <source>
        <dbReference type="PDB" id="7JR9"/>
    </source>
</evidence>
<evidence type="ECO:0007829" key="6">
    <source>
        <dbReference type="PDB" id="7JRJ"/>
    </source>
</evidence>
<evidence type="ECO:0007829" key="7">
    <source>
        <dbReference type="PDB" id="7JTK"/>
    </source>
</evidence>
<sequence length="459" mass="48846">MAADVGQALAFLQQVKTTQGASIYEGLKAALAKVLEDRPVNAVEALETSVLSTPPAANLSVPLVPAASAAAAAAAVAKASLFGDPEPVLDPESGEPIDPDAPNEFECEDVEGDGDLLDGLGVGLGRQEMYAAMLAVKRLGEDAKRGVSTVRFFGKFFGTQADYYVFETTLQSNPDMPEAPEGTIPLEPYGEGVNAYIYFVSNTLGGPLQQLPYVTPEQIKASRLLRRYLTGRLDAPVSAFPAFPGNEANYLRALIARISAATVCCPRGFFTADDDSAELSANDEWVPLKGREMALPVNWSHRYAHLKGQGRTVTHKRDPPDEEEEPEKNFWTAEEMEAGPPPLATLDTDAPLPAATGDKVPPPAWSPVFASASVTTRNQVAGVRSNRWPGAVCACAGRHFTSMYVGWGIKAGGEWSPCPPPPPVPQWGAPAAGVEGGQQLLLECNDLPPKPAPPEEEDE</sequence>
<comment type="function">
    <text evidence="2">Flagellar radial spokes contribute to the regulation of dynein arm activity and thus the pattern of flagellar bending. They consist of a thin stalk, which is attached to the a subfiber of the outer doublet microtubule, and a bulbous head, which is attached to the stalk and appears to interact with the projections from the central pair of microtubules.</text>
</comment>
<comment type="subunit">
    <text evidence="2">The radial spoke head is made of five different polypeptides (RSP1, RSP4, RSP6, RSP9, and RSP10).</text>
</comment>
<comment type="subcellular location">
    <subcellularLocation>
        <location evidence="2">Cytoplasm</location>
        <location evidence="2">Cytoskeleton</location>
        <location evidence="2">Flagellum axoneme</location>
    </subcellularLocation>
    <text evidence="2">Radial spoke.</text>
</comment>
<comment type="PTM">
    <text evidence="3">Asymmetrically dimethylated at Arg-267 and Arg-398 during flagellum resorption. Probably methylated by PRMT1.</text>
</comment>
<comment type="similarity">
    <text evidence="4">Belongs to the flagellar radial spoke RSP4/6 family.</text>
</comment>